<reference key="1">
    <citation type="submission" date="2007-12" db="EMBL/GenBank/DDBJ databases">
        <title>Complete sequence of chromosome of Francisella philomiragia subsp. philomiragia ATCC 25017.</title>
        <authorList>
            <consortium name="US DOE Joint Genome Institute"/>
            <person name="Copeland A."/>
            <person name="Lucas S."/>
            <person name="Lapidus A."/>
            <person name="Barry K."/>
            <person name="Detter J.C."/>
            <person name="Glavina del Rio T."/>
            <person name="Hammon N."/>
            <person name="Israni S."/>
            <person name="Dalin E."/>
            <person name="Tice H."/>
            <person name="Pitluck S."/>
            <person name="Chain P."/>
            <person name="Malfatti S."/>
            <person name="Shin M."/>
            <person name="Vergez L."/>
            <person name="Schmutz J."/>
            <person name="Larimer F."/>
            <person name="Land M."/>
            <person name="Hauser L."/>
            <person name="Richardson P."/>
        </authorList>
    </citation>
    <scope>NUCLEOTIDE SEQUENCE [LARGE SCALE GENOMIC DNA]</scope>
    <source>
        <strain>ATCC 25017 / CCUG 19701 / FSC 153 / O#319-036</strain>
    </source>
</reference>
<keyword id="KW-0030">Aminoacyl-tRNA synthetase</keyword>
<keyword id="KW-0067">ATP-binding</keyword>
<keyword id="KW-0963">Cytoplasm</keyword>
<keyword id="KW-0436">Ligase</keyword>
<keyword id="KW-0547">Nucleotide-binding</keyword>
<keyword id="KW-0648">Protein biosynthesis</keyword>
<dbReference type="EC" id="6.1.1.11" evidence="1"/>
<dbReference type="EMBL" id="CP000937">
    <property type="protein sequence ID" value="ABZ86394.1"/>
    <property type="molecule type" value="Genomic_DNA"/>
</dbReference>
<dbReference type="SMR" id="B0TYM9"/>
<dbReference type="KEGG" id="fph:Fphi_0173"/>
<dbReference type="eggNOG" id="COG0172">
    <property type="taxonomic scope" value="Bacteria"/>
</dbReference>
<dbReference type="HOGENOM" id="CLU_023797_1_1_6"/>
<dbReference type="UniPathway" id="UPA00906">
    <property type="reaction ID" value="UER00895"/>
</dbReference>
<dbReference type="GO" id="GO:0005737">
    <property type="term" value="C:cytoplasm"/>
    <property type="evidence" value="ECO:0007669"/>
    <property type="project" value="UniProtKB-SubCell"/>
</dbReference>
<dbReference type="GO" id="GO:0005524">
    <property type="term" value="F:ATP binding"/>
    <property type="evidence" value="ECO:0007669"/>
    <property type="project" value="UniProtKB-UniRule"/>
</dbReference>
<dbReference type="GO" id="GO:0004828">
    <property type="term" value="F:serine-tRNA ligase activity"/>
    <property type="evidence" value="ECO:0007669"/>
    <property type="project" value="UniProtKB-UniRule"/>
</dbReference>
<dbReference type="GO" id="GO:0016260">
    <property type="term" value="P:selenocysteine biosynthetic process"/>
    <property type="evidence" value="ECO:0007669"/>
    <property type="project" value="UniProtKB-UniRule"/>
</dbReference>
<dbReference type="GO" id="GO:0006434">
    <property type="term" value="P:seryl-tRNA aminoacylation"/>
    <property type="evidence" value="ECO:0007669"/>
    <property type="project" value="UniProtKB-UniRule"/>
</dbReference>
<dbReference type="CDD" id="cd00770">
    <property type="entry name" value="SerRS_core"/>
    <property type="match status" value="1"/>
</dbReference>
<dbReference type="Gene3D" id="3.30.930.10">
    <property type="entry name" value="Bira Bifunctional Protein, Domain 2"/>
    <property type="match status" value="1"/>
</dbReference>
<dbReference type="Gene3D" id="1.10.287.40">
    <property type="entry name" value="Serine-tRNA synthetase, tRNA binding domain"/>
    <property type="match status" value="1"/>
</dbReference>
<dbReference type="HAMAP" id="MF_00176">
    <property type="entry name" value="Ser_tRNA_synth_type1"/>
    <property type="match status" value="1"/>
</dbReference>
<dbReference type="InterPro" id="IPR002314">
    <property type="entry name" value="aa-tRNA-synt_IIb"/>
</dbReference>
<dbReference type="InterPro" id="IPR006195">
    <property type="entry name" value="aa-tRNA-synth_II"/>
</dbReference>
<dbReference type="InterPro" id="IPR045864">
    <property type="entry name" value="aa-tRNA-synth_II/BPL/LPL"/>
</dbReference>
<dbReference type="InterPro" id="IPR002317">
    <property type="entry name" value="Ser-tRNA-ligase_type_1"/>
</dbReference>
<dbReference type="InterPro" id="IPR015866">
    <property type="entry name" value="Ser-tRNA-synth_1_N"/>
</dbReference>
<dbReference type="InterPro" id="IPR042103">
    <property type="entry name" value="SerRS_1_N_sf"/>
</dbReference>
<dbReference type="InterPro" id="IPR033729">
    <property type="entry name" value="SerRS_core"/>
</dbReference>
<dbReference type="InterPro" id="IPR010978">
    <property type="entry name" value="tRNA-bd_arm"/>
</dbReference>
<dbReference type="NCBIfam" id="TIGR00414">
    <property type="entry name" value="serS"/>
    <property type="match status" value="1"/>
</dbReference>
<dbReference type="PANTHER" id="PTHR43697:SF1">
    <property type="entry name" value="SERINE--TRNA LIGASE"/>
    <property type="match status" value="1"/>
</dbReference>
<dbReference type="PANTHER" id="PTHR43697">
    <property type="entry name" value="SERYL-TRNA SYNTHETASE"/>
    <property type="match status" value="1"/>
</dbReference>
<dbReference type="Pfam" id="PF02403">
    <property type="entry name" value="Seryl_tRNA_N"/>
    <property type="match status" value="1"/>
</dbReference>
<dbReference type="Pfam" id="PF00587">
    <property type="entry name" value="tRNA-synt_2b"/>
    <property type="match status" value="1"/>
</dbReference>
<dbReference type="PIRSF" id="PIRSF001529">
    <property type="entry name" value="Ser-tRNA-synth_IIa"/>
    <property type="match status" value="1"/>
</dbReference>
<dbReference type="PRINTS" id="PR00981">
    <property type="entry name" value="TRNASYNTHSER"/>
</dbReference>
<dbReference type="SUPFAM" id="SSF55681">
    <property type="entry name" value="Class II aaRS and biotin synthetases"/>
    <property type="match status" value="1"/>
</dbReference>
<dbReference type="SUPFAM" id="SSF46589">
    <property type="entry name" value="tRNA-binding arm"/>
    <property type="match status" value="1"/>
</dbReference>
<dbReference type="PROSITE" id="PS50862">
    <property type="entry name" value="AA_TRNA_LIGASE_II"/>
    <property type="match status" value="1"/>
</dbReference>
<sequence>MLDAKYIKDNLEEVAEKLATRGYQFDIAEFKAQEAKRKDLQERTQELQSQRNTISKEIGKRKSKGEDASDIFAKVNDINDELKVIEKVLKDLQDCINNTLLSMPNLPADDVPVGKDESENVEIKKWGTPREFHPEAQAKDHADIGEILNMIDFKAAAKITGSRFVVLKSKIAKLHRALTQFMLDMHTEKHGYEELYVPYMVNNDSLYGTGQLPKFSEDLFKLEGDFEYSLIPTAEVPITNLVRDEILDTESLPRYYTAHTPCFRSEAGSYGRDTKGLIRQHQFEKVELVHITIADKGEESLELLTSHAEKVLQKLNLPYRVVKLCTGDMGFSAKKTYDLEVWIPSQNTYREISSCSWCGDFQARRMKARHKNPSMKKPELVHTLNGSGLAVGRTLLAIIENYQQEDGSIMIPEALINYMGGISVIK</sequence>
<gene>
    <name evidence="1" type="primary">serS</name>
    <name type="ordered locus">Fphi_0173</name>
</gene>
<protein>
    <recommendedName>
        <fullName evidence="1">Serine--tRNA ligase</fullName>
        <ecNumber evidence="1">6.1.1.11</ecNumber>
    </recommendedName>
    <alternativeName>
        <fullName evidence="1">Seryl-tRNA synthetase</fullName>
        <shortName evidence="1">SerRS</shortName>
    </alternativeName>
    <alternativeName>
        <fullName evidence="1">Seryl-tRNA(Ser/Sec) synthetase</fullName>
    </alternativeName>
</protein>
<evidence type="ECO:0000255" key="1">
    <source>
        <dbReference type="HAMAP-Rule" id="MF_00176"/>
    </source>
</evidence>
<organism>
    <name type="scientific">Francisella philomiragia subsp. philomiragia (strain ATCC 25017 / CCUG 19701 / FSC 153 / O#319-036)</name>
    <dbReference type="NCBI Taxonomy" id="484022"/>
    <lineage>
        <taxon>Bacteria</taxon>
        <taxon>Pseudomonadati</taxon>
        <taxon>Pseudomonadota</taxon>
        <taxon>Gammaproteobacteria</taxon>
        <taxon>Thiotrichales</taxon>
        <taxon>Francisellaceae</taxon>
        <taxon>Francisella</taxon>
    </lineage>
</organism>
<proteinExistence type="inferred from homology"/>
<feature type="chain" id="PRO_1000077197" description="Serine--tRNA ligase">
    <location>
        <begin position="1"/>
        <end position="426"/>
    </location>
</feature>
<feature type="binding site" evidence="1">
    <location>
        <begin position="233"/>
        <end position="235"/>
    </location>
    <ligand>
        <name>L-serine</name>
        <dbReference type="ChEBI" id="CHEBI:33384"/>
    </ligand>
</feature>
<feature type="binding site" evidence="1">
    <location>
        <begin position="264"/>
        <end position="266"/>
    </location>
    <ligand>
        <name>ATP</name>
        <dbReference type="ChEBI" id="CHEBI:30616"/>
    </ligand>
</feature>
<feature type="binding site" evidence="1">
    <location>
        <position position="287"/>
    </location>
    <ligand>
        <name>L-serine</name>
        <dbReference type="ChEBI" id="CHEBI:33384"/>
    </ligand>
</feature>
<feature type="binding site" evidence="1">
    <location>
        <begin position="351"/>
        <end position="354"/>
    </location>
    <ligand>
        <name>ATP</name>
        <dbReference type="ChEBI" id="CHEBI:30616"/>
    </ligand>
</feature>
<feature type="binding site" evidence="1">
    <location>
        <position position="387"/>
    </location>
    <ligand>
        <name>L-serine</name>
        <dbReference type="ChEBI" id="CHEBI:33384"/>
    </ligand>
</feature>
<accession>B0TYM9</accession>
<comment type="function">
    <text evidence="1">Catalyzes the attachment of serine to tRNA(Ser). Is also able to aminoacylate tRNA(Sec) with serine, to form the misacylated tRNA L-seryl-tRNA(Sec), which will be further converted into selenocysteinyl-tRNA(Sec).</text>
</comment>
<comment type="catalytic activity">
    <reaction evidence="1">
        <text>tRNA(Ser) + L-serine + ATP = L-seryl-tRNA(Ser) + AMP + diphosphate + H(+)</text>
        <dbReference type="Rhea" id="RHEA:12292"/>
        <dbReference type="Rhea" id="RHEA-COMP:9669"/>
        <dbReference type="Rhea" id="RHEA-COMP:9703"/>
        <dbReference type="ChEBI" id="CHEBI:15378"/>
        <dbReference type="ChEBI" id="CHEBI:30616"/>
        <dbReference type="ChEBI" id="CHEBI:33019"/>
        <dbReference type="ChEBI" id="CHEBI:33384"/>
        <dbReference type="ChEBI" id="CHEBI:78442"/>
        <dbReference type="ChEBI" id="CHEBI:78533"/>
        <dbReference type="ChEBI" id="CHEBI:456215"/>
        <dbReference type="EC" id="6.1.1.11"/>
    </reaction>
</comment>
<comment type="catalytic activity">
    <reaction evidence="1">
        <text>tRNA(Sec) + L-serine + ATP = L-seryl-tRNA(Sec) + AMP + diphosphate + H(+)</text>
        <dbReference type="Rhea" id="RHEA:42580"/>
        <dbReference type="Rhea" id="RHEA-COMP:9742"/>
        <dbReference type="Rhea" id="RHEA-COMP:10128"/>
        <dbReference type="ChEBI" id="CHEBI:15378"/>
        <dbReference type="ChEBI" id="CHEBI:30616"/>
        <dbReference type="ChEBI" id="CHEBI:33019"/>
        <dbReference type="ChEBI" id="CHEBI:33384"/>
        <dbReference type="ChEBI" id="CHEBI:78442"/>
        <dbReference type="ChEBI" id="CHEBI:78533"/>
        <dbReference type="ChEBI" id="CHEBI:456215"/>
        <dbReference type="EC" id="6.1.1.11"/>
    </reaction>
</comment>
<comment type="pathway">
    <text evidence="1">Aminoacyl-tRNA biosynthesis; selenocysteinyl-tRNA(Sec) biosynthesis; L-seryl-tRNA(Sec) from L-serine and tRNA(Sec): step 1/1.</text>
</comment>
<comment type="subunit">
    <text evidence="1">Homodimer. The tRNA molecule binds across the dimer.</text>
</comment>
<comment type="subcellular location">
    <subcellularLocation>
        <location evidence="1">Cytoplasm</location>
    </subcellularLocation>
</comment>
<comment type="domain">
    <text evidence="1">Consists of two distinct domains, a catalytic core and a N-terminal extension that is involved in tRNA binding.</text>
</comment>
<comment type="similarity">
    <text evidence="1">Belongs to the class-II aminoacyl-tRNA synthetase family. Type-1 seryl-tRNA synthetase subfamily.</text>
</comment>
<name>SYS_FRAP2</name>